<name>RECU_LACH4</name>
<keyword id="KW-0963">Cytoplasm</keyword>
<keyword id="KW-0227">DNA damage</keyword>
<keyword id="KW-0233">DNA recombination</keyword>
<keyword id="KW-0234">DNA repair</keyword>
<keyword id="KW-0255">Endonuclease</keyword>
<keyword id="KW-0378">Hydrolase</keyword>
<keyword id="KW-0460">Magnesium</keyword>
<keyword id="KW-0479">Metal-binding</keyword>
<keyword id="KW-0540">Nuclease</keyword>
<evidence type="ECO:0000255" key="1">
    <source>
        <dbReference type="HAMAP-Rule" id="MF_00130"/>
    </source>
</evidence>
<sequence>MVKYPSGSLAAFRKPINKKENEIRHTYTHRKGVNFSDRGMTLEQQINESNKYYLNEEIAVVHKKPTPIQIVKVDYPKRSKAVIREAYFRQASTTDYNGVYKGYYLDFEAKETRNKTNFPLKNFHEHQIFHLSACLKQKGFCFTIIRFASLERYFVTPASFVINAWREKDKSSMTLKEIEDNSYEIKSGFRPTLPYLKAVDNFIADREREL</sequence>
<accession>A8YVJ3</accession>
<protein>
    <recommendedName>
        <fullName evidence="1">Holliday junction resolvase RecU</fullName>
        <ecNumber evidence="1">3.1.21.10</ecNumber>
    </recommendedName>
    <alternativeName>
        <fullName evidence="1">Recombination protein U homolog</fullName>
    </alternativeName>
</protein>
<comment type="function">
    <text evidence="1">Endonuclease that resolves Holliday junction intermediates in genetic recombination. Cleaves mobile four-strand junctions by introducing symmetrical nicks in paired strands. Promotes annealing of linear ssDNA with homologous dsDNA. Required for DNA repair, homologous recombination and chromosome segregation.</text>
</comment>
<comment type="catalytic activity">
    <reaction evidence="1">
        <text>Endonucleolytic cleavage at a junction such as a reciprocal single-stranded crossover between two homologous DNA duplexes (Holliday junction).</text>
        <dbReference type="EC" id="3.1.21.10"/>
    </reaction>
</comment>
<comment type="cofactor">
    <cofactor evidence="1">
        <name>Mg(2+)</name>
        <dbReference type="ChEBI" id="CHEBI:18420"/>
    </cofactor>
    <text evidence="1">Binds 1 Mg(2+) ion per subunit.</text>
</comment>
<comment type="subcellular location">
    <subcellularLocation>
        <location evidence="1">Cytoplasm</location>
    </subcellularLocation>
</comment>
<comment type="similarity">
    <text evidence="1">Belongs to the RecU family.</text>
</comment>
<dbReference type="EC" id="3.1.21.10" evidence="1"/>
<dbReference type="EMBL" id="CP000517">
    <property type="protein sequence ID" value="ABX27280.1"/>
    <property type="molecule type" value="Genomic_DNA"/>
</dbReference>
<dbReference type="RefSeq" id="WP_012211946.1">
    <property type="nucleotide sequence ID" value="NC_010080.1"/>
</dbReference>
<dbReference type="SMR" id="A8YVJ3"/>
<dbReference type="KEGG" id="lhe:lhv_1266"/>
<dbReference type="eggNOG" id="COG3331">
    <property type="taxonomic scope" value="Bacteria"/>
</dbReference>
<dbReference type="HOGENOM" id="CLU_096340_0_0_9"/>
<dbReference type="Proteomes" id="UP000000790">
    <property type="component" value="Chromosome"/>
</dbReference>
<dbReference type="GO" id="GO:0005737">
    <property type="term" value="C:cytoplasm"/>
    <property type="evidence" value="ECO:0007669"/>
    <property type="project" value="UniProtKB-SubCell"/>
</dbReference>
<dbReference type="GO" id="GO:0004519">
    <property type="term" value="F:endonuclease activity"/>
    <property type="evidence" value="ECO:0007669"/>
    <property type="project" value="UniProtKB-UniRule"/>
</dbReference>
<dbReference type="GO" id="GO:0000287">
    <property type="term" value="F:magnesium ion binding"/>
    <property type="evidence" value="ECO:0007669"/>
    <property type="project" value="UniProtKB-UniRule"/>
</dbReference>
<dbReference type="GO" id="GO:0003676">
    <property type="term" value="F:nucleic acid binding"/>
    <property type="evidence" value="ECO:0007669"/>
    <property type="project" value="InterPro"/>
</dbReference>
<dbReference type="GO" id="GO:0007059">
    <property type="term" value="P:chromosome segregation"/>
    <property type="evidence" value="ECO:0007669"/>
    <property type="project" value="UniProtKB-UniRule"/>
</dbReference>
<dbReference type="GO" id="GO:0006310">
    <property type="term" value="P:DNA recombination"/>
    <property type="evidence" value="ECO:0007669"/>
    <property type="project" value="UniProtKB-UniRule"/>
</dbReference>
<dbReference type="GO" id="GO:0006281">
    <property type="term" value="P:DNA repair"/>
    <property type="evidence" value="ECO:0007669"/>
    <property type="project" value="UniProtKB-UniRule"/>
</dbReference>
<dbReference type="CDD" id="cd22354">
    <property type="entry name" value="RecU-like"/>
    <property type="match status" value="1"/>
</dbReference>
<dbReference type="Gene3D" id="3.40.1350.10">
    <property type="match status" value="1"/>
</dbReference>
<dbReference type="HAMAP" id="MF_00130">
    <property type="entry name" value="RecU"/>
    <property type="match status" value="1"/>
</dbReference>
<dbReference type="InterPro" id="IPR004612">
    <property type="entry name" value="Resolv_RecU"/>
</dbReference>
<dbReference type="InterPro" id="IPR011335">
    <property type="entry name" value="Restrct_endonuc-II-like"/>
</dbReference>
<dbReference type="InterPro" id="IPR011856">
    <property type="entry name" value="tRNA_endonuc-like_dom_sf"/>
</dbReference>
<dbReference type="NCBIfam" id="NF002584">
    <property type="entry name" value="PRK02234.1-5"/>
    <property type="match status" value="1"/>
</dbReference>
<dbReference type="NCBIfam" id="TIGR00648">
    <property type="entry name" value="recU"/>
    <property type="match status" value="1"/>
</dbReference>
<dbReference type="Pfam" id="PF03838">
    <property type="entry name" value="RecU"/>
    <property type="match status" value="1"/>
</dbReference>
<dbReference type="PIRSF" id="PIRSF037785">
    <property type="entry name" value="RecU"/>
    <property type="match status" value="1"/>
</dbReference>
<dbReference type="SUPFAM" id="SSF52980">
    <property type="entry name" value="Restriction endonuclease-like"/>
    <property type="match status" value="1"/>
</dbReference>
<gene>
    <name evidence="1" type="primary">recU</name>
    <name type="ordered locus">lhv_1266</name>
</gene>
<proteinExistence type="inferred from homology"/>
<organism>
    <name type="scientific">Lactobacillus helveticus (strain DPC 4571)</name>
    <dbReference type="NCBI Taxonomy" id="405566"/>
    <lineage>
        <taxon>Bacteria</taxon>
        <taxon>Bacillati</taxon>
        <taxon>Bacillota</taxon>
        <taxon>Bacilli</taxon>
        <taxon>Lactobacillales</taxon>
        <taxon>Lactobacillaceae</taxon>
        <taxon>Lactobacillus</taxon>
    </lineage>
</organism>
<feature type="chain" id="PRO_1000071420" description="Holliday junction resolvase RecU">
    <location>
        <begin position="1"/>
        <end position="210"/>
    </location>
</feature>
<feature type="binding site" evidence="1">
    <location>
        <position position="93"/>
    </location>
    <ligand>
        <name>Mg(2+)</name>
        <dbReference type="ChEBI" id="CHEBI:18420"/>
    </ligand>
</feature>
<feature type="binding site" evidence="1">
    <location>
        <position position="95"/>
    </location>
    <ligand>
        <name>Mg(2+)</name>
        <dbReference type="ChEBI" id="CHEBI:18420"/>
    </ligand>
</feature>
<feature type="binding site" evidence="1">
    <location>
        <position position="108"/>
    </location>
    <ligand>
        <name>Mg(2+)</name>
        <dbReference type="ChEBI" id="CHEBI:18420"/>
    </ligand>
</feature>
<feature type="binding site" evidence="1">
    <location>
        <position position="127"/>
    </location>
    <ligand>
        <name>Mg(2+)</name>
        <dbReference type="ChEBI" id="CHEBI:18420"/>
    </ligand>
</feature>
<feature type="site" description="Transition state stabilizer" evidence="1">
    <location>
        <position position="110"/>
    </location>
</feature>
<reference key="1">
    <citation type="journal article" date="2008" name="J. Bacteriol.">
        <title>Genome sequence of Lactobacillus helveticus: an organism distinguished by selective gene loss and IS element expansion.</title>
        <authorList>
            <person name="Callanan M."/>
            <person name="Kaleta P."/>
            <person name="O'Callaghan J."/>
            <person name="O'Sullivan O."/>
            <person name="Jordan K."/>
            <person name="McAuliffe O."/>
            <person name="Sangrador-Vegas A."/>
            <person name="Slattery L."/>
            <person name="Fitzgerald G.F."/>
            <person name="Beresford T."/>
            <person name="Ross R.P."/>
        </authorList>
    </citation>
    <scope>NUCLEOTIDE SEQUENCE [LARGE SCALE GENOMIC DNA]</scope>
    <source>
        <strain>DPC 4571</strain>
    </source>
</reference>